<reference key="1">
    <citation type="journal article" date="1996" name="DNA Res.">
        <title>A 460-kb DNA sequence of the Escherichia coli K-12 genome corresponding to the 40.1-50.0 min region on the linkage map.</title>
        <authorList>
            <person name="Itoh T."/>
            <person name="Aiba H."/>
            <person name="Baba T."/>
            <person name="Fujita K."/>
            <person name="Hayashi K."/>
            <person name="Inada T."/>
            <person name="Isono K."/>
            <person name="Kasai H."/>
            <person name="Kimura S."/>
            <person name="Kitakawa M."/>
            <person name="Kitagawa M."/>
            <person name="Makino K."/>
            <person name="Miki T."/>
            <person name="Mizobuchi K."/>
            <person name="Mori H."/>
            <person name="Mori T."/>
            <person name="Motomura K."/>
            <person name="Nakade S."/>
            <person name="Nakamura Y."/>
            <person name="Nashimoto H."/>
            <person name="Nishio Y."/>
            <person name="Oshima T."/>
            <person name="Saito N."/>
            <person name="Sampei G."/>
            <person name="Seki Y."/>
            <person name="Sivasundaram S."/>
            <person name="Tagami H."/>
            <person name="Takeda J."/>
            <person name="Takemoto K."/>
            <person name="Wada C."/>
            <person name="Yamamoto Y."/>
            <person name="Horiuchi T."/>
        </authorList>
    </citation>
    <scope>NUCLEOTIDE SEQUENCE [LARGE SCALE GENOMIC DNA]</scope>
    <source>
        <strain>K12 / W3110 / ATCC 27325 / DSM 5911</strain>
    </source>
</reference>
<reference key="2">
    <citation type="journal article" date="1997" name="Science">
        <title>The complete genome sequence of Escherichia coli K-12.</title>
        <authorList>
            <person name="Blattner F.R."/>
            <person name="Plunkett G. III"/>
            <person name="Bloch C.A."/>
            <person name="Perna N.T."/>
            <person name="Burland V."/>
            <person name="Riley M."/>
            <person name="Collado-Vides J."/>
            <person name="Glasner J.D."/>
            <person name="Rode C.K."/>
            <person name="Mayhew G.F."/>
            <person name="Gregor J."/>
            <person name="Davis N.W."/>
            <person name="Kirkpatrick H.A."/>
            <person name="Goeden M.A."/>
            <person name="Rose D.J."/>
            <person name="Mau B."/>
            <person name="Shao Y."/>
        </authorList>
    </citation>
    <scope>NUCLEOTIDE SEQUENCE [LARGE SCALE GENOMIC DNA]</scope>
    <source>
        <strain>K12 / MG1655 / ATCC 47076</strain>
    </source>
</reference>
<reference key="3">
    <citation type="journal article" date="2006" name="Mol. Syst. Biol.">
        <title>Highly accurate genome sequences of Escherichia coli K-12 strains MG1655 and W3110.</title>
        <authorList>
            <person name="Hayashi K."/>
            <person name="Morooka N."/>
            <person name="Yamamoto Y."/>
            <person name="Fujita K."/>
            <person name="Isono K."/>
            <person name="Choi S."/>
            <person name="Ohtsubo E."/>
            <person name="Baba T."/>
            <person name="Wanner B.L."/>
            <person name="Mori H."/>
            <person name="Horiuchi T."/>
        </authorList>
    </citation>
    <scope>NUCLEOTIDE SEQUENCE [LARGE SCALE GENOMIC DNA]</scope>
    <source>
        <strain>K12 / W3110 / ATCC 27325 / DSM 5911</strain>
    </source>
</reference>
<reference key="4">
    <citation type="submission" date="1996-02" db="EMBL/GenBank/DDBJ databases">
        <authorList>
            <person name="Gupta S.D."/>
            <person name="Wu H.C."/>
        </authorList>
    </citation>
    <scope>NUCLEOTIDE SEQUENCE [GENOMIC DNA] OF 102-188</scope>
    <source>
        <strain>K12 / MC4100 / ATCC 35695 / DSM 6574</strain>
    </source>
</reference>
<reference key="5">
    <citation type="journal article" date="1999" name="Electrophoresis">
        <title>Enrichment of low abundance proteins of Escherichia coli by hydroxyapatite chromatography.</title>
        <authorList>
            <person name="Fountoulakis M."/>
            <person name="Takacs M.-F."/>
            <person name="Berndt P."/>
            <person name="Langen H."/>
            <person name="Takacs B."/>
        </authorList>
    </citation>
    <scope>IDENTIFICATION BY MASS SPECTROMETRY</scope>
    <source>
        <strain>B / BL21</strain>
    </source>
</reference>
<name>YECM_ECOLI</name>
<sequence length="188" mass="21205">MANWQSIDELQDIASDLPRFIHALDELSRRLGLNITPLTADHISLRCHQNATAERWRRGFEQCGELLSENMINGRPICLFKLHEPVQVAHWQFSIVELPWPGEKRYPHEGWEHIEIVLPGDPETLNARALALLSDEGLSLPGISVKTSSPKGEHERLPNPTLAVTDGKTTIKFHPWSIEEIVASEQSA</sequence>
<feature type="chain" id="PRO_0000169079" description="Protein YecM">
    <location>
        <begin position="1"/>
        <end position="188"/>
    </location>
</feature>
<feature type="sequence conflict" description="In Ref. 4; AAA89200." evidence="1" ref="4">
    <original>G</original>
    <variation>R</variation>
    <location>
        <position position="102"/>
    </location>
</feature>
<feature type="sequence conflict" description="In Ref. 4; AAA89200." evidence="1" ref="4">
    <original>G</original>
    <variation>V</variation>
    <location>
        <position position="120"/>
    </location>
</feature>
<feature type="sequence conflict" description="In Ref. 4; AAA89201." evidence="1" ref="4">
    <original>G</original>
    <variation>A</variation>
    <location>
        <position position="167"/>
    </location>
</feature>
<feature type="helix" evidence="2">
    <location>
        <begin position="4"/>
        <end position="6"/>
    </location>
</feature>
<feature type="helix" evidence="2">
    <location>
        <begin position="8"/>
        <end position="10"/>
    </location>
</feature>
<feature type="helix" evidence="2">
    <location>
        <begin position="11"/>
        <end position="31"/>
    </location>
</feature>
<feature type="strand" evidence="2">
    <location>
        <begin position="39"/>
        <end position="46"/>
    </location>
</feature>
<feature type="helix" evidence="2">
    <location>
        <begin position="50"/>
        <end position="60"/>
    </location>
</feature>
<feature type="turn" evidence="2">
    <location>
        <begin position="61"/>
        <end position="63"/>
    </location>
</feature>
<feature type="strand" evidence="2">
    <location>
        <begin position="64"/>
        <end position="72"/>
    </location>
</feature>
<feature type="strand" evidence="2">
    <location>
        <begin position="75"/>
        <end position="88"/>
    </location>
</feature>
<feature type="strand" evidence="2">
    <location>
        <begin position="91"/>
        <end position="99"/>
    </location>
</feature>
<feature type="strand" evidence="2">
    <location>
        <begin position="110"/>
        <end position="117"/>
    </location>
</feature>
<feature type="helix" evidence="2">
    <location>
        <begin position="122"/>
        <end position="124"/>
    </location>
</feature>
<feature type="helix" evidence="2">
    <location>
        <begin position="125"/>
        <end position="131"/>
    </location>
</feature>
<feature type="helix" evidence="2">
    <location>
        <begin position="135"/>
        <end position="139"/>
    </location>
</feature>
<feature type="strand" evidence="2">
    <location>
        <begin position="144"/>
        <end position="147"/>
    </location>
</feature>
<feature type="strand" evidence="2">
    <location>
        <begin position="162"/>
        <end position="168"/>
    </location>
</feature>
<feature type="strand" evidence="2">
    <location>
        <begin position="170"/>
        <end position="176"/>
    </location>
</feature>
<feature type="helix" evidence="2">
    <location>
        <begin position="178"/>
        <end position="184"/>
    </location>
</feature>
<comment type="similarity">
    <text evidence="1">To H.influenzae HI_1582/HI_1581.</text>
</comment>
<comment type="sequence caution" evidence="1">
    <conflict type="frameshift">
        <sequence resource="EMBL-CDS" id="AAA89200"/>
    </conflict>
</comment>
<comment type="sequence caution" evidence="1">
    <conflict type="frameshift">
        <sequence resource="EMBL-CDS" id="AAA89201"/>
    </conflict>
    <text>Produces two separate ORFs.</text>
</comment>
<accession>P52007</accession>
<accession>P52008</accession>
<accession>P76295</accession>
<dbReference type="EMBL" id="U00096">
    <property type="protein sequence ID" value="AAC74945.2"/>
    <property type="molecule type" value="Genomic_DNA"/>
</dbReference>
<dbReference type="EMBL" id="AP009048">
    <property type="protein sequence ID" value="BAA15685.2"/>
    <property type="molecule type" value="Genomic_DNA"/>
</dbReference>
<dbReference type="EMBL" id="L38618">
    <property type="protein sequence ID" value="AAA89200.1"/>
    <property type="status" value="ALT_FRAME"/>
    <property type="molecule type" value="Genomic_DNA"/>
</dbReference>
<dbReference type="EMBL" id="L38618">
    <property type="protein sequence ID" value="AAA89201.1"/>
    <property type="status" value="ALT_FRAME"/>
    <property type="molecule type" value="Genomic_DNA"/>
</dbReference>
<dbReference type="PIR" id="C64950">
    <property type="entry name" value="C64950"/>
</dbReference>
<dbReference type="RefSeq" id="NP_416389.4">
    <property type="nucleotide sequence ID" value="NC_000913.3"/>
</dbReference>
<dbReference type="RefSeq" id="WP_001326725.1">
    <property type="nucleotide sequence ID" value="NZ_SSZK01000001.1"/>
</dbReference>
<dbReference type="PDB" id="1K4N">
    <property type="method" value="X-ray"/>
    <property type="resolution" value="1.60 A"/>
    <property type="chains" value="A=1-188"/>
</dbReference>
<dbReference type="PDBsum" id="1K4N"/>
<dbReference type="SMR" id="P52007"/>
<dbReference type="BioGRID" id="4262119">
    <property type="interactions" value="15"/>
</dbReference>
<dbReference type="FunCoup" id="P52007">
    <property type="interactions" value="7"/>
</dbReference>
<dbReference type="STRING" id="511145.b1875"/>
<dbReference type="jPOST" id="P52007"/>
<dbReference type="PaxDb" id="511145-b1875"/>
<dbReference type="EnsemblBacteria" id="AAC74945">
    <property type="protein sequence ID" value="AAC74945"/>
    <property type="gene ID" value="b1875"/>
</dbReference>
<dbReference type="GeneID" id="946415"/>
<dbReference type="KEGG" id="ecj:JW5309"/>
<dbReference type="KEGG" id="eco:b1875"/>
<dbReference type="KEGG" id="ecoc:C3026_10670"/>
<dbReference type="PATRIC" id="fig|1411691.4.peg.373"/>
<dbReference type="EchoBASE" id="EB3181"/>
<dbReference type="eggNOG" id="COG3102">
    <property type="taxonomic scope" value="Bacteria"/>
</dbReference>
<dbReference type="HOGENOM" id="CLU_122770_0_0_6"/>
<dbReference type="InParanoid" id="P52007"/>
<dbReference type="OMA" id="SFAQADH"/>
<dbReference type="OrthoDB" id="5689462at2"/>
<dbReference type="PhylomeDB" id="P52007"/>
<dbReference type="BioCyc" id="EcoCyc:G7025-MONOMER"/>
<dbReference type="EvolutionaryTrace" id="P52007"/>
<dbReference type="PRO" id="PR:P52007"/>
<dbReference type="Proteomes" id="UP000000625">
    <property type="component" value="Chromosome"/>
</dbReference>
<dbReference type="GO" id="GO:0005829">
    <property type="term" value="C:cytosol"/>
    <property type="evidence" value="ECO:0000314"/>
    <property type="project" value="EcoCyc"/>
</dbReference>
<dbReference type="CDD" id="cd07268">
    <property type="entry name" value="VOC_EcYecM_like"/>
    <property type="match status" value="1"/>
</dbReference>
<dbReference type="FunFam" id="3.10.180.10:FF:000005">
    <property type="entry name" value="YecM family protein"/>
    <property type="match status" value="1"/>
</dbReference>
<dbReference type="Gene3D" id="3.10.180.10">
    <property type="entry name" value="2,3-Dihydroxybiphenyl 1,2-Dioxygenase, domain 1"/>
    <property type="match status" value="1"/>
</dbReference>
<dbReference type="InterPro" id="IPR010393">
    <property type="entry name" value="DUF991_YecM-like"/>
</dbReference>
<dbReference type="InterPro" id="IPR029068">
    <property type="entry name" value="Glyas_Bleomycin-R_OHBP_Dase"/>
</dbReference>
<dbReference type="NCBIfam" id="NF008678">
    <property type="entry name" value="PRK11700.1-1"/>
    <property type="match status" value="1"/>
</dbReference>
<dbReference type="NCBIfam" id="NF008681">
    <property type="entry name" value="PRK11700.1-4"/>
    <property type="match status" value="1"/>
</dbReference>
<dbReference type="NCBIfam" id="NF008682">
    <property type="entry name" value="PRK11700.1-5"/>
    <property type="match status" value="1"/>
</dbReference>
<dbReference type="PANTHER" id="PTHR37519">
    <property type="match status" value="1"/>
</dbReference>
<dbReference type="PANTHER" id="PTHR37519:SF1">
    <property type="entry name" value="DIHYDROXYBIPHENYL DIOXYGENASE DOMAIN-CONTAINING PROTEIN"/>
    <property type="match status" value="1"/>
</dbReference>
<dbReference type="Pfam" id="PF06185">
    <property type="entry name" value="YecM"/>
    <property type="match status" value="1"/>
</dbReference>
<dbReference type="SUPFAM" id="SSF54593">
    <property type="entry name" value="Glyoxalase/Bleomycin resistance protein/Dihydroxybiphenyl dioxygenase"/>
    <property type="match status" value="1"/>
</dbReference>
<protein>
    <recommendedName>
        <fullName>Protein YecM</fullName>
    </recommendedName>
</protein>
<organism>
    <name type="scientific">Escherichia coli (strain K12)</name>
    <dbReference type="NCBI Taxonomy" id="83333"/>
    <lineage>
        <taxon>Bacteria</taxon>
        <taxon>Pseudomonadati</taxon>
        <taxon>Pseudomonadota</taxon>
        <taxon>Gammaproteobacteria</taxon>
        <taxon>Enterobacterales</taxon>
        <taxon>Enterobacteriaceae</taxon>
        <taxon>Escherichia</taxon>
    </lineage>
</organism>
<proteinExistence type="evidence at protein level"/>
<keyword id="KW-0002">3D-structure</keyword>
<keyword id="KW-1185">Reference proteome</keyword>
<evidence type="ECO:0000305" key="1"/>
<evidence type="ECO:0007829" key="2">
    <source>
        <dbReference type="PDB" id="1K4N"/>
    </source>
</evidence>
<gene>
    <name type="primary">yecM</name>
    <name type="synonym">yecL</name>
    <name type="ordered locus">b1875</name>
    <name type="ordered locus">JW5309</name>
</gene>